<dbReference type="EC" id="3.4.23.-"/>
<dbReference type="EC" id="2.7.7.49"/>
<dbReference type="EMBL" id="X03431">
    <property type="protein sequence ID" value="CAB57796.1"/>
    <property type="status" value="ALT_SEQ"/>
    <property type="molecule type" value="Genomic_DNA"/>
</dbReference>
<dbReference type="PIR" id="B24872">
    <property type="entry name" value="B24872"/>
</dbReference>
<dbReference type="SMR" id="P20825"/>
<dbReference type="MEROPS" id="A02.052"/>
<dbReference type="FlyBase" id="FBgn0027622">
    <property type="gene designation" value="297\pol"/>
</dbReference>
<dbReference type="OrthoDB" id="8060624at2759"/>
<dbReference type="PRO" id="PR:P20825"/>
<dbReference type="GO" id="GO:0042575">
    <property type="term" value="C:DNA polymerase complex"/>
    <property type="evidence" value="ECO:0007669"/>
    <property type="project" value="UniProtKB-ARBA"/>
</dbReference>
<dbReference type="GO" id="GO:0004190">
    <property type="term" value="F:aspartic-type endopeptidase activity"/>
    <property type="evidence" value="ECO:0007669"/>
    <property type="project" value="UniProtKB-KW"/>
</dbReference>
<dbReference type="GO" id="GO:0004519">
    <property type="term" value="F:endonuclease activity"/>
    <property type="evidence" value="ECO:0007669"/>
    <property type="project" value="UniProtKB-KW"/>
</dbReference>
<dbReference type="GO" id="GO:0003676">
    <property type="term" value="F:nucleic acid binding"/>
    <property type="evidence" value="ECO:0007669"/>
    <property type="project" value="InterPro"/>
</dbReference>
<dbReference type="GO" id="GO:0003964">
    <property type="term" value="F:RNA-directed DNA polymerase activity"/>
    <property type="evidence" value="ECO:0007669"/>
    <property type="project" value="UniProtKB-KW"/>
</dbReference>
<dbReference type="GO" id="GO:0015074">
    <property type="term" value="P:DNA integration"/>
    <property type="evidence" value="ECO:0007669"/>
    <property type="project" value="InterPro"/>
</dbReference>
<dbReference type="GO" id="GO:0006508">
    <property type="term" value="P:proteolysis"/>
    <property type="evidence" value="ECO:0007669"/>
    <property type="project" value="UniProtKB-KW"/>
</dbReference>
<dbReference type="CDD" id="cd09274">
    <property type="entry name" value="RNase_HI_RT_Ty3"/>
    <property type="match status" value="1"/>
</dbReference>
<dbReference type="CDD" id="cd01647">
    <property type="entry name" value="RT_LTR"/>
    <property type="match status" value="1"/>
</dbReference>
<dbReference type="FunFam" id="3.10.10.10:FF:000007">
    <property type="entry name" value="Retrovirus-related Pol polyprotein from transposon 17.6-like Protein"/>
    <property type="match status" value="1"/>
</dbReference>
<dbReference type="FunFam" id="3.10.20.370:FF:000001">
    <property type="entry name" value="Retrovirus-related Pol polyprotein from transposon 17.6-like protein"/>
    <property type="match status" value="1"/>
</dbReference>
<dbReference type="FunFam" id="3.30.70.270:FF:000020">
    <property type="entry name" value="Transposon Tf2-6 polyprotein-like Protein"/>
    <property type="match status" value="1"/>
</dbReference>
<dbReference type="Gene3D" id="3.30.70.270">
    <property type="match status" value="2"/>
</dbReference>
<dbReference type="Gene3D" id="2.40.70.10">
    <property type="entry name" value="Acid Proteases"/>
    <property type="match status" value="1"/>
</dbReference>
<dbReference type="Gene3D" id="3.10.10.10">
    <property type="entry name" value="HIV Type 1 Reverse Transcriptase, subunit A, domain 1"/>
    <property type="match status" value="1"/>
</dbReference>
<dbReference type="Gene3D" id="3.30.420.10">
    <property type="entry name" value="Ribonuclease H-like superfamily/Ribonuclease H"/>
    <property type="match status" value="1"/>
</dbReference>
<dbReference type="InterPro" id="IPR001969">
    <property type="entry name" value="Aspartic_peptidase_AS"/>
</dbReference>
<dbReference type="InterPro" id="IPR043502">
    <property type="entry name" value="DNA/RNA_pol_sf"/>
</dbReference>
<dbReference type="InterPro" id="IPR001584">
    <property type="entry name" value="Integrase_cat-core"/>
</dbReference>
<dbReference type="InterPro" id="IPR041588">
    <property type="entry name" value="Integrase_H2C2"/>
</dbReference>
<dbReference type="InterPro" id="IPR021109">
    <property type="entry name" value="Peptidase_aspartic_dom_sf"/>
</dbReference>
<dbReference type="InterPro" id="IPR050951">
    <property type="entry name" value="Retrovirus_Pol_polyprotein"/>
</dbReference>
<dbReference type="InterPro" id="IPR043128">
    <property type="entry name" value="Rev_trsase/Diguanyl_cyclase"/>
</dbReference>
<dbReference type="InterPro" id="IPR012337">
    <property type="entry name" value="RNaseH-like_sf"/>
</dbReference>
<dbReference type="InterPro" id="IPR036397">
    <property type="entry name" value="RNaseH_sf"/>
</dbReference>
<dbReference type="InterPro" id="IPR000477">
    <property type="entry name" value="RT_dom"/>
</dbReference>
<dbReference type="InterPro" id="IPR041373">
    <property type="entry name" value="RT_RNaseH"/>
</dbReference>
<dbReference type="PANTHER" id="PTHR37984">
    <property type="entry name" value="PROTEIN CBG26694"/>
    <property type="match status" value="1"/>
</dbReference>
<dbReference type="PANTHER" id="PTHR37984:SF5">
    <property type="entry name" value="PROTEIN NYNRIN-LIKE"/>
    <property type="match status" value="1"/>
</dbReference>
<dbReference type="Pfam" id="PF17921">
    <property type="entry name" value="Integrase_H2C2"/>
    <property type="match status" value="1"/>
</dbReference>
<dbReference type="Pfam" id="PF17917">
    <property type="entry name" value="RT_RNaseH"/>
    <property type="match status" value="1"/>
</dbReference>
<dbReference type="Pfam" id="PF00078">
    <property type="entry name" value="RVT_1"/>
    <property type="match status" value="1"/>
</dbReference>
<dbReference type="SUPFAM" id="SSF50630">
    <property type="entry name" value="Acid proteases"/>
    <property type="match status" value="1"/>
</dbReference>
<dbReference type="SUPFAM" id="SSF56672">
    <property type="entry name" value="DNA/RNA polymerases"/>
    <property type="match status" value="1"/>
</dbReference>
<dbReference type="SUPFAM" id="SSF53098">
    <property type="entry name" value="Ribonuclease H-like"/>
    <property type="match status" value="1"/>
</dbReference>
<dbReference type="PROSITE" id="PS00141">
    <property type="entry name" value="ASP_PROTEASE"/>
    <property type="match status" value="1"/>
</dbReference>
<dbReference type="PROSITE" id="PS50994">
    <property type="entry name" value="INTEGRASE"/>
    <property type="match status" value="1"/>
</dbReference>
<dbReference type="PROSITE" id="PS50878">
    <property type="entry name" value="RT_POL"/>
    <property type="match status" value="1"/>
</dbReference>
<sequence length="1059" mass="123311">TKRKFSVNSSGKYEYIKIVYKGRSYKCLLDTGSTINMINENIFCLPIQNSRCEVLTSNGPITLNDLIMLPRNSIFKKTEPFYVHRFSNNYDMLIGRKLLKNAQSVINYKNDTVTLFDQTYKLITSESERNQNLYIQRTPESIASSDQESIKKLDFSQFRLDHLNQEETFKLKGLLNKFRNLEYKEGEKLTFTNTIKHVLNTTHNSPIYSKQYPLAQTHEIEVENQVQEMLNQGLIRESNSPYNSPTWVVPKKPDASGANKYRVVIDYRKLNEITIPDRYPIPNMDEILGKLGKCQYFTTIDLAKGFHQIEMDEESISKTAFSTKSGHYEYLRMPFGLRNAPATFQRCMNNILRPLLNKHCLVYLDDIIIFSTSLTEHLNSIQLVFTKLADANLKLQLDKCEFLKKEANFLGHIVTPDGIKPNPIKVKAIVSYPIPTKDKEIRAFLGLTGYYRKFIPNYADIAKPMTSCLKKRTKIDTQKLEYIEAFEKLKALIIRDPILQLPDFEKKFVLTTDASNLALGAVLSQNGHPISFISRTLNDHELNYSAIEKELLAIVWATKTFRHYLLGRQFLIASDHQPLRWLHNLKEPGAKLERWRVRLSEYQFKIDYIKGKENSVADALSRIKIEENHHSEATQHSAEEDNSNLIHLTEKPINYFKKQIIFIKSDKNKVEHSKIFGNSITTIQYDVMTLEKAKQILLDHFIHRNITIYIESDVDFEIVQRAHIEIVNTTYTKVIRSLFLLKNVGSYAEFKEIILQSHEKLLHPGIQKMTKLFKENHFFPNSQLLIQNIINECNICNLAKTEHRNTKMPLKITPNPEHCREKFVVDIYSSEGKHYISCIDIYSKFATLEQIKTKDWIECRNALMRIFNQLGKPKLLKADRDGAFSSLALKRWLEEEEVELQLNTAKNGVADVERLHKTINEKIRIINSSDDEEVKLSKIETILYTYNQKIKHDTTGQRPAQIFLYAGHPILDTQKIKEKKIEKINEDRREFNIDTNYRKGPLQKGKLENPFKPTKNVEQTDPDHYKITNRNRVTHYYKTQFKKQKKNNKLSISQAPGTR</sequence>
<reference key="1">
    <citation type="journal article" date="1986" name="Eur. J. Biochem.">
        <title>Complete nucleotide sequence and genome organization of a Drosophila transposable genetic element, 297.</title>
        <authorList>
            <person name="Inouye S."/>
            <person name="Yuki S."/>
            <person name="Saigo K."/>
        </authorList>
    </citation>
    <scope>NUCLEOTIDE SEQUENCE [GENOMIC DNA]</scope>
</reference>
<name>POL2_DROME</name>
<keyword id="KW-0064">Aspartyl protease</keyword>
<keyword id="KW-0255">Endonuclease</keyword>
<keyword id="KW-0378">Hydrolase</keyword>
<keyword id="KW-0540">Nuclease</keyword>
<keyword id="KW-0548">Nucleotidyltransferase</keyword>
<keyword id="KW-0645">Protease</keyword>
<keyword id="KW-0695">RNA-directed DNA polymerase</keyword>
<keyword id="KW-0808">Transferase</keyword>
<keyword id="KW-0814">Transposable element</keyword>
<evidence type="ECO:0000255" key="1">
    <source>
        <dbReference type="PROSITE-ProRule" id="PRU00405"/>
    </source>
</evidence>
<evidence type="ECO:0000255" key="2">
    <source>
        <dbReference type="PROSITE-ProRule" id="PRU00457"/>
    </source>
</evidence>
<evidence type="ECO:0000255" key="3">
    <source>
        <dbReference type="PROSITE-ProRule" id="PRU10094"/>
    </source>
</evidence>
<evidence type="ECO:0000256" key="4">
    <source>
        <dbReference type="SAM" id="MobiDB-lite"/>
    </source>
</evidence>
<comment type="catalytic activity">
    <reaction evidence="1">
        <text>DNA(n) + a 2'-deoxyribonucleoside 5'-triphosphate = DNA(n+1) + diphosphate</text>
        <dbReference type="Rhea" id="RHEA:22508"/>
        <dbReference type="Rhea" id="RHEA-COMP:17339"/>
        <dbReference type="Rhea" id="RHEA-COMP:17340"/>
        <dbReference type="ChEBI" id="CHEBI:33019"/>
        <dbReference type="ChEBI" id="CHEBI:61560"/>
        <dbReference type="ChEBI" id="CHEBI:173112"/>
        <dbReference type="EC" id="2.7.7.49"/>
    </reaction>
</comment>
<feature type="chain" id="PRO_0000199556" description="Retrovirus-related Pol polyprotein from transposon 297">
    <location>
        <begin position="1"/>
        <end position="1059"/>
    </location>
</feature>
<feature type="domain" description="Reverse transcriptase" evidence="1">
    <location>
        <begin position="230"/>
        <end position="414"/>
    </location>
</feature>
<feature type="domain" description="Integrase catalytic" evidence="2">
    <location>
        <begin position="812"/>
        <end position="967"/>
    </location>
</feature>
<feature type="region of interest" description="Disordered" evidence="4">
    <location>
        <begin position="998"/>
        <end position="1059"/>
    </location>
</feature>
<feature type="compositionally biased region" description="Basic residues" evidence="4">
    <location>
        <begin position="1027"/>
        <end position="1048"/>
    </location>
</feature>
<feature type="compositionally biased region" description="Polar residues" evidence="4">
    <location>
        <begin position="1050"/>
        <end position="1059"/>
    </location>
</feature>
<feature type="active site" description="For protease activity" evidence="3">
    <location>
        <position position="30"/>
    </location>
</feature>
<accession>P20825</accession>
<gene>
    <name type="primary">pol</name>
</gene>
<protein>
    <recommendedName>
        <fullName>Retrovirus-related Pol polyprotein from transposon 297</fullName>
    </recommendedName>
    <domain>
        <recommendedName>
            <fullName>Protease</fullName>
            <ecNumber>3.4.23.-</ecNumber>
        </recommendedName>
    </domain>
    <domain>
        <recommendedName>
            <fullName>Reverse transcriptase</fullName>
            <ecNumber>2.7.7.49</ecNumber>
        </recommendedName>
    </domain>
    <domain>
        <recommendedName>
            <fullName>Endonuclease</fullName>
        </recommendedName>
    </domain>
</protein>
<proteinExistence type="predicted"/>
<organism>
    <name type="scientific">Drosophila melanogaster</name>
    <name type="common">Fruit fly</name>
    <dbReference type="NCBI Taxonomy" id="7227"/>
    <lineage>
        <taxon>Eukaryota</taxon>
        <taxon>Metazoa</taxon>
        <taxon>Ecdysozoa</taxon>
        <taxon>Arthropoda</taxon>
        <taxon>Hexapoda</taxon>
        <taxon>Insecta</taxon>
        <taxon>Pterygota</taxon>
        <taxon>Neoptera</taxon>
        <taxon>Endopterygota</taxon>
        <taxon>Diptera</taxon>
        <taxon>Brachycera</taxon>
        <taxon>Muscomorpha</taxon>
        <taxon>Ephydroidea</taxon>
        <taxon>Drosophilidae</taxon>
        <taxon>Drosophila</taxon>
        <taxon>Sophophora</taxon>
    </lineage>
</organism>